<keyword id="KW-0472">Membrane</keyword>
<keyword id="KW-0496">Mitochondrion</keyword>
<keyword id="KW-0999">Mitochondrion inner membrane</keyword>
<keyword id="KW-1185">Reference proteome</keyword>
<keyword id="KW-0677">Repeat</keyword>
<keyword id="KW-0812">Transmembrane</keyword>
<keyword id="KW-1133">Transmembrane helix</keyword>
<keyword id="KW-0813">Transport</keyword>
<accession>Q944H5</accession>
<accession>Q9SUE4</accession>
<proteinExistence type="evidence at transcript level"/>
<evidence type="ECO:0000255" key="1"/>
<evidence type="ECO:0000269" key="2">
    <source>
    </source>
</evidence>
<evidence type="ECO:0000305" key="3"/>
<gene>
    <name type="primary">MTM1</name>
    <name type="ordered locus">At4g27940</name>
    <name type="ORF">T13J8.50</name>
</gene>
<dbReference type="EMBL" id="AL035524">
    <property type="protein sequence ID" value="CAB36763.1"/>
    <property type="status" value="ALT_SEQ"/>
    <property type="molecule type" value="Genomic_DNA"/>
</dbReference>
<dbReference type="EMBL" id="AL161572">
    <property type="protein sequence ID" value="CAB79596.1"/>
    <property type="status" value="ALT_SEQ"/>
    <property type="molecule type" value="Genomic_DNA"/>
</dbReference>
<dbReference type="EMBL" id="CP002687">
    <property type="protein sequence ID" value="AEE85411.1"/>
    <property type="molecule type" value="Genomic_DNA"/>
</dbReference>
<dbReference type="EMBL" id="AF428433">
    <property type="protein sequence ID" value="AAL16202.1"/>
    <property type="molecule type" value="mRNA"/>
</dbReference>
<dbReference type="EMBL" id="AY125549">
    <property type="protein sequence ID" value="AAM78059.1"/>
    <property type="molecule type" value="mRNA"/>
</dbReference>
<dbReference type="EMBL" id="AY085360">
    <property type="protein sequence ID" value="AAM62590.1"/>
    <property type="molecule type" value="mRNA"/>
</dbReference>
<dbReference type="PIR" id="T02895">
    <property type="entry name" value="T02895"/>
</dbReference>
<dbReference type="RefSeq" id="NP_567790.1">
    <property type="nucleotide sequence ID" value="NM_118932.5"/>
</dbReference>
<dbReference type="SMR" id="Q944H5"/>
<dbReference type="BioGRID" id="14194">
    <property type="interactions" value="1"/>
</dbReference>
<dbReference type="FunCoup" id="Q944H5">
    <property type="interactions" value="2690"/>
</dbReference>
<dbReference type="STRING" id="3702.Q944H5"/>
<dbReference type="PaxDb" id="3702-AT4G27940.1"/>
<dbReference type="ProteomicsDB" id="250909"/>
<dbReference type="EnsemblPlants" id="AT4G27940.1">
    <property type="protein sequence ID" value="AT4G27940.1"/>
    <property type="gene ID" value="AT4G27940"/>
</dbReference>
<dbReference type="GeneID" id="828907"/>
<dbReference type="Gramene" id="AT4G27940.1">
    <property type="protein sequence ID" value="AT4G27940.1"/>
    <property type="gene ID" value="AT4G27940"/>
</dbReference>
<dbReference type="KEGG" id="ath:AT4G27940"/>
<dbReference type="Araport" id="AT4G27940"/>
<dbReference type="TAIR" id="AT4G27940">
    <property type="gene designation" value="MTM1"/>
</dbReference>
<dbReference type="eggNOG" id="KOG0761">
    <property type="taxonomic scope" value="Eukaryota"/>
</dbReference>
<dbReference type="HOGENOM" id="CLU_015166_0_1_1"/>
<dbReference type="InParanoid" id="Q944H5"/>
<dbReference type="OMA" id="EPTFWFS"/>
<dbReference type="OrthoDB" id="1747031at2759"/>
<dbReference type="PhylomeDB" id="Q944H5"/>
<dbReference type="PRO" id="PR:Q944H5"/>
<dbReference type="Proteomes" id="UP000006548">
    <property type="component" value="Chromosome 4"/>
</dbReference>
<dbReference type="ExpressionAtlas" id="Q944H5">
    <property type="expression patterns" value="baseline and differential"/>
</dbReference>
<dbReference type="GO" id="GO:0016020">
    <property type="term" value="C:membrane"/>
    <property type="evidence" value="ECO:0000250"/>
    <property type="project" value="UniProtKB"/>
</dbReference>
<dbReference type="GO" id="GO:0005743">
    <property type="term" value="C:mitochondrial inner membrane"/>
    <property type="evidence" value="ECO:0000250"/>
    <property type="project" value="UniProtKB"/>
</dbReference>
<dbReference type="GO" id="GO:0005739">
    <property type="term" value="C:mitochondrion"/>
    <property type="evidence" value="ECO:0000314"/>
    <property type="project" value="UniProtKB"/>
</dbReference>
<dbReference type="GO" id="GO:0016530">
    <property type="term" value="F:metallochaperone activity"/>
    <property type="evidence" value="ECO:0000316"/>
    <property type="project" value="UniProtKB"/>
</dbReference>
<dbReference type="GO" id="GO:0004784">
    <property type="term" value="F:superoxide dismutase activity"/>
    <property type="evidence" value="ECO:0000314"/>
    <property type="project" value="TAIR"/>
</dbReference>
<dbReference type="GO" id="GO:0006828">
    <property type="term" value="P:manganese ion transport"/>
    <property type="evidence" value="ECO:0000250"/>
    <property type="project" value="UniProtKB"/>
</dbReference>
<dbReference type="GO" id="GO:1990542">
    <property type="term" value="P:mitochondrial transmembrane transport"/>
    <property type="evidence" value="ECO:0007669"/>
    <property type="project" value="InterPro"/>
</dbReference>
<dbReference type="GO" id="GO:1901562">
    <property type="term" value="P:response to paraquat"/>
    <property type="evidence" value="ECO:0000270"/>
    <property type="project" value="UniProtKB"/>
</dbReference>
<dbReference type="GO" id="GO:0097501">
    <property type="term" value="P:stress response to metal ion"/>
    <property type="evidence" value="ECO:0000270"/>
    <property type="project" value="TAIR"/>
</dbReference>
<dbReference type="FunFam" id="1.50.40.10:FF:000287">
    <property type="entry name" value="Mitochondrial carrier protein MTM1"/>
    <property type="match status" value="1"/>
</dbReference>
<dbReference type="Gene3D" id="1.50.40.10">
    <property type="entry name" value="Mitochondrial carrier domain"/>
    <property type="match status" value="2"/>
</dbReference>
<dbReference type="InterPro" id="IPR018108">
    <property type="entry name" value="Mitochondrial_sb/sol_carrier"/>
</dbReference>
<dbReference type="InterPro" id="IPR023395">
    <property type="entry name" value="Mt_carrier_dom_sf"/>
</dbReference>
<dbReference type="InterPro" id="IPR045315">
    <property type="entry name" value="Mtm1-like"/>
</dbReference>
<dbReference type="PANTHER" id="PTHR45760">
    <property type="entry name" value="FI19922P1-RELATED"/>
    <property type="match status" value="1"/>
</dbReference>
<dbReference type="PANTHER" id="PTHR45760:SF2">
    <property type="entry name" value="FI19922P1-RELATED"/>
    <property type="match status" value="1"/>
</dbReference>
<dbReference type="Pfam" id="PF00153">
    <property type="entry name" value="Mito_carr"/>
    <property type="match status" value="4"/>
</dbReference>
<dbReference type="SUPFAM" id="SSF103506">
    <property type="entry name" value="Mitochondrial carrier"/>
    <property type="match status" value="1"/>
</dbReference>
<dbReference type="PROSITE" id="PS50920">
    <property type="entry name" value="SOLCAR"/>
    <property type="match status" value="3"/>
</dbReference>
<sequence>MVEAERAENSWIASETSPSSSPVVIESSDFSITDGMRDVSGFGIASRPQLDKGLSENNIGFTERVFSAAGAAVLSAVTLNPLDVVKTRLQAQAAGMSYSHPLSNSIGRMAFFGPNMMFADLRCSPSCARAGVEGTVSICPPDCFQYKGTFDVFTKIIRQEGLGRLWRGTNAGLALAVPMVGIYLPFYDMFRNRLEELSREKAPAMTFCVPTVAGSLARSLACTVCYPIDLARTRMQAFKEAKAGVKPPGVFKTLVGVFSEVRTANNLESSLHNYRGLWRGLGAQLARDVPFSAICWSTLEPIKKRLLGVAGNDTNLVGVFGATFSAGFIAGSIAAAATCPLDVARTRRQIEKDPGRALMMTTRQTLIEVWRDGGMRGLFMGMGPRVARAGPSVGIVVSFYEVVKYVLHRHASS</sequence>
<name>MTM1_ARATH</name>
<feature type="chain" id="PRO_0000421269" description="Mitochondrial carrier protein MTM1">
    <location>
        <begin position="1"/>
        <end position="413"/>
    </location>
</feature>
<feature type="transmembrane region" description="Helical; Name=1" evidence="1">
    <location>
        <begin position="65"/>
        <end position="85"/>
    </location>
</feature>
<feature type="transmembrane region" description="Helical; Name=2" evidence="1">
    <location>
        <begin position="170"/>
        <end position="190"/>
    </location>
</feature>
<feature type="transmembrane region" description="Helical; Name=3" evidence="1">
    <location>
        <begin position="204"/>
        <end position="226"/>
    </location>
</feature>
<feature type="transmembrane region" description="Helical; Name=4" evidence="1">
    <location>
        <begin position="284"/>
        <end position="304"/>
    </location>
</feature>
<feature type="transmembrane region" description="Helical; Name=5" evidence="1">
    <location>
        <begin position="316"/>
        <end position="336"/>
    </location>
</feature>
<feature type="transmembrane region" description="Helical; Name=6" evidence="1">
    <location>
        <begin position="378"/>
        <end position="399"/>
    </location>
</feature>
<feature type="repeat" description="Solcar 1">
    <location>
        <begin position="59"/>
        <end position="193"/>
    </location>
</feature>
<feature type="repeat" description="Solcar 2">
    <location>
        <begin position="205"/>
        <end position="305"/>
    </location>
</feature>
<feature type="repeat" description="Solcar 3">
    <location>
        <begin position="318"/>
        <end position="406"/>
    </location>
</feature>
<organism>
    <name type="scientific">Arabidopsis thaliana</name>
    <name type="common">Mouse-ear cress</name>
    <dbReference type="NCBI Taxonomy" id="3702"/>
    <lineage>
        <taxon>Eukaryota</taxon>
        <taxon>Viridiplantae</taxon>
        <taxon>Streptophyta</taxon>
        <taxon>Embryophyta</taxon>
        <taxon>Tracheophyta</taxon>
        <taxon>Spermatophyta</taxon>
        <taxon>Magnoliopsida</taxon>
        <taxon>eudicotyledons</taxon>
        <taxon>Gunneridae</taxon>
        <taxon>Pentapetalae</taxon>
        <taxon>rosids</taxon>
        <taxon>malvids</taxon>
        <taxon>Brassicales</taxon>
        <taxon>Brassicaceae</taxon>
        <taxon>Camelineae</taxon>
        <taxon>Arabidopsis</taxon>
    </lineage>
</organism>
<comment type="function">
    <text evidence="2">Involved in the mitochondrial activation of MSD1 by specifically facilitating insertion of the essential manganese cofactor. Has the ability to activate iron regulon in an iron-dependent manner.</text>
</comment>
<comment type="subcellular location">
    <subcellularLocation>
        <location evidence="2">Mitochondrion inner membrane</location>
        <topology evidence="2">Multi-pass membrane protein</topology>
    </subcellularLocation>
</comment>
<comment type="tissue specificity">
    <text evidence="2">Ubiquitous.</text>
</comment>
<comment type="induction">
    <text evidence="2">By paraquat (methyl viologen).</text>
</comment>
<comment type="similarity">
    <text evidence="3">Belongs to the mitochondrial carrier (TC 2.A.29) family.</text>
</comment>
<comment type="sequence caution" evidence="3">
    <conflict type="erroneous gene model prediction">
        <sequence resource="EMBL-CDS" id="CAB36763"/>
    </conflict>
</comment>
<comment type="sequence caution" evidence="3">
    <conflict type="erroneous gene model prediction">
        <sequence resource="EMBL-CDS" id="CAB79596"/>
    </conflict>
</comment>
<reference key="1">
    <citation type="journal article" date="1999" name="Nature">
        <title>Sequence and analysis of chromosome 4 of the plant Arabidopsis thaliana.</title>
        <authorList>
            <person name="Mayer K.F.X."/>
            <person name="Schueller C."/>
            <person name="Wambutt R."/>
            <person name="Murphy G."/>
            <person name="Volckaert G."/>
            <person name="Pohl T."/>
            <person name="Duesterhoeft A."/>
            <person name="Stiekema W."/>
            <person name="Entian K.-D."/>
            <person name="Terryn N."/>
            <person name="Harris B."/>
            <person name="Ansorge W."/>
            <person name="Brandt P."/>
            <person name="Grivell L.A."/>
            <person name="Rieger M."/>
            <person name="Weichselgartner M."/>
            <person name="de Simone V."/>
            <person name="Obermaier B."/>
            <person name="Mache R."/>
            <person name="Mueller M."/>
            <person name="Kreis M."/>
            <person name="Delseny M."/>
            <person name="Puigdomenech P."/>
            <person name="Watson M."/>
            <person name="Schmidtheini T."/>
            <person name="Reichert B."/>
            <person name="Portetelle D."/>
            <person name="Perez-Alonso M."/>
            <person name="Boutry M."/>
            <person name="Bancroft I."/>
            <person name="Vos P."/>
            <person name="Hoheisel J."/>
            <person name="Zimmermann W."/>
            <person name="Wedler H."/>
            <person name="Ridley P."/>
            <person name="Langham S.-A."/>
            <person name="McCullagh B."/>
            <person name="Bilham L."/>
            <person name="Robben J."/>
            <person name="van der Schueren J."/>
            <person name="Grymonprez B."/>
            <person name="Chuang Y.-J."/>
            <person name="Vandenbussche F."/>
            <person name="Braeken M."/>
            <person name="Weltjens I."/>
            <person name="Voet M."/>
            <person name="Bastiaens I."/>
            <person name="Aert R."/>
            <person name="Defoor E."/>
            <person name="Weitzenegger T."/>
            <person name="Bothe G."/>
            <person name="Ramsperger U."/>
            <person name="Hilbert H."/>
            <person name="Braun M."/>
            <person name="Holzer E."/>
            <person name="Brandt A."/>
            <person name="Peters S."/>
            <person name="van Staveren M."/>
            <person name="Dirkse W."/>
            <person name="Mooijman P."/>
            <person name="Klein Lankhorst R."/>
            <person name="Rose M."/>
            <person name="Hauf J."/>
            <person name="Koetter P."/>
            <person name="Berneiser S."/>
            <person name="Hempel S."/>
            <person name="Feldpausch M."/>
            <person name="Lamberth S."/>
            <person name="Van den Daele H."/>
            <person name="De Keyser A."/>
            <person name="Buysshaert C."/>
            <person name="Gielen J."/>
            <person name="Villarroel R."/>
            <person name="De Clercq R."/>
            <person name="van Montagu M."/>
            <person name="Rogers J."/>
            <person name="Cronin A."/>
            <person name="Quail M.A."/>
            <person name="Bray-Allen S."/>
            <person name="Clark L."/>
            <person name="Doggett J."/>
            <person name="Hall S."/>
            <person name="Kay M."/>
            <person name="Lennard N."/>
            <person name="McLay K."/>
            <person name="Mayes R."/>
            <person name="Pettett A."/>
            <person name="Rajandream M.A."/>
            <person name="Lyne M."/>
            <person name="Benes V."/>
            <person name="Rechmann S."/>
            <person name="Borkova D."/>
            <person name="Bloecker H."/>
            <person name="Scharfe M."/>
            <person name="Grimm M."/>
            <person name="Loehnert T.-H."/>
            <person name="Dose S."/>
            <person name="de Haan M."/>
            <person name="Maarse A.C."/>
            <person name="Schaefer M."/>
            <person name="Mueller-Auer S."/>
            <person name="Gabel C."/>
            <person name="Fuchs M."/>
            <person name="Fartmann B."/>
            <person name="Granderath K."/>
            <person name="Dauner D."/>
            <person name="Herzl A."/>
            <person name="Neumann S."/>
            <person name="Argiriou A."/>
            <person name="Vitale D."/>
            <person name="Liguori R."/>
            <person name="Piravandi E."/>
            <person name="Massenet O."/>
            <person name="Quigley F."/>
            <person name="Clabauld G."/>
            <person name="Muendlein A."/>
            <person name="Felber R."/>
            <person name="Schnabl S."/>
            <person name="Hiller R."/>
            <person name="Schmidt W."/>
            <person name="Lecharny A."/>
            <person name="Aubourg S."/>
            <person name="Chefdor F."/>
            <person name="Cooke R."/>
            <person name="Berger C."/>
            <person name="Monfort A."/>
            <person name="Casacuberta E."/>
            <person name="Gibbons T."/>
            <person name="Weber N."/>
            <person name="Vandenbol M."/>
            <person name="Bargues M."/>
            <person name="Terol J."/>
            <person name="Torres A."/>
            <person name="Perez-Perez A."/>
            <person name="Purnelle B."/>
            <person name="Bent E."/>
            <person name="Johnson S."/>
            <person name="Tacon D."/>
            <person name="Jesse T."/>
            <person name="Heijnen L."/>
            <person name="Schwarz S."/>
            <person name="Scholler P."/>
            <person name="Heber S."/>
            <person name="Francs P."/>
            <person name="Bielke C."/>
            <person name="Frishman D."/>
            <person name="Haase D."/>
            <person name="Lemcke K."/>
            <person name="Mewes H.-W."/>
            <person name="Stocker S."/>
            <person name="Zaccaria P."/>
            <person name="Bevan M."/>
            <person name="Wilson R.K."/>
            <person name="de la Bastide M."/>
            <person name="Habermann K."/>
            <person name="Parnell L."/>
            <person name="Dedhia N."/>
            <person name="Gnoj L."/>
            <person name="Schutz K."/>
            <person name="Huang E."/>
            <person name="Spiegel L."/>
            <person name="Sekhon M."/>
            <person name="Murray J."/>
            <person name="Sheet P."/>
            <person name="Cordes M."/>
            <person name="Abu-Threideh J."/>
            <person name="Stoneking T."/>
            <person name="Kalicki J."/>
            <person name="Graves T."/>
            <person name="Harmon G."/>
            <person name="Edwards J."/>
            <person name="Latreille P."/>
            <person name="Courtney L."/>
            <person name="Cloud J."/>
            <person name="Abbott A."/>
            <person name="Scott K."/>
            <person name="Johnson D."/>
            <person name="Minx P."/>
            <person name="Bentley D."/>
            <person name="Fulton B."/>
            <person name="Miller N."/>
            <person name="Greco T."/>
            <person name="Kemp K."/>
            <person name="Kramer J."/>
            <person name="Fulton L."/>
            <person name="Mardis E."/>
            <person name="Dante M."/>
            <person name="Pepin K."/>
            <person name="Hillier L.W."/>
            <person name="Nelson J."/>
            <person name="Spieth J."/>
            <person name="Ryan E."/>
            <person name="Andrews S."/>
            <person name="Geisel C."/>
            <person name="Layman D."/>
            <person name="Du H."/>
            <person name="Ali J."/>
            <person name="Berghoff A."/>
            <person name="Jones K."/>
            <person name="Drone K."/>
            <person name="Cotton M."/>
            <person name="Joshu C."/>
            <person name="Antonoiu B."/>
            <person name="Zidanic M."/>
            <person name="Strong C."/>
            <person name="Sun H."/>
            <person name="Lamar B."/>
            <person name="Yordan C."/>
            <person name="Ma P."/>
            <person name="Zhong J."/>
            <person name="Preston R."/>
            <person name="Vil D."/>
            <person name="Shekher M."/>
            <person name="Matero A."/>
            <person name="Shah R."/>
            <person name="Swaby I.K."/>
            <person name="O'Shaughnessy A."/>
            <person name="Rodriguez M."/>
            <person name="Hoffman J."/>
            <person name="Till S."/>
            <person name="Granat S."/>
            <person name="Shohdy N."/>
            <person name="Hasegawa A."/>
            <person name="Hameed A."/>
            <person name="Lodhi M."/>
            <person name="Johnson A."/>
            <person name="Chen E."/>
            <person name="Marra M.A."/>
            <person name="Martienssen R."/>
            <person name="McCombie W.R."/>
        </authorList>
    </citation>
    <scope>NUCLEOTIDE SEQUENCE [LARGE SCALE GENOMIC DNA]</scope>
    <source>
        <strain>cv. Columbia</strain>
    </source>
</reference>
<reference key="2">
    <citation type="journal article" date="2017" name="Plant J.">
        <title>Araport11: a complete reannotation of the Arabidopsis thaliana reference genome.</title>
        <authorList>
            <person name="Cheng C.Y."/>
            <person name="Krishnakumar V."/>
            <person name="Chan A.P."/>
            <person name="Thibaud-Nissen F."/>
            <person name="Schobel S."/>
            <person name="Town C.D."/>
        </authorList>
    </citation>
    <scope>GENOME REANNOTATION</scope>
    <source>
        <strain>cv. Columbia</strain>
    </source>
</reference>
<reference key="3">
    <citation type="journal article" date="2003" name="Science">
        <title>Empirical analysis of transcriptional activity in the Arabidopsis genome.</title>
        <authorList>
            <person name="Yamada K."/>
            <person name="Lim J."/>
            <person name="Dale J.M."/>
            <person name="Chen H."/>
            <person name="Shinn P."/>
            <person name="Palm C.J."/>
            <person name="Southwick A.M."/>
            <person name="Wu H.C."/>
            <person name="Kim C.J."/>
            <person name="Nguyen M."/>
            <person name="Pham P.K."/>
            <person name="Cheuk R.F."/>
            <person name="Karlin-Newmann G."/>
            <person name="Liu S.X."/>
            <person name="Lam B."/>
            <person name="Sakano H."/>
            <person name="Wu T."/>
            <person name="Yu G."/>
            <person name="Miranda M."/>
            <person name="Quach H.L."/>
            <person name="Tripp M."/>
            <person name="Chang C.H."/>
            <person name="Lee J.M."/>
            <person name="Toriumi M.J."/>
            <person name="Chan M.M."/>
            <person name="Tang C.C."/>
            <person name="Onodera C.S."/>
            <person name="Deng J.M."/>
            <person name="Akiyama K."/>
            <person name="Ansari Y."/>
            <person name="Arakawa T."/>
            <person name="Banh J."/>
            <person name="Banno F."/>
            <person name="Bowser L."/>
            <person name="Brooks S.Y."/>
            <person name="Carninci P."/>
            <person name="Chao Q."/>
            <person name="Choy N."/>
            <person name="Enju A."/>
            <person name="Goldsmith A.D."/>
            <person name="Gurjal M."/>
            <person name="Hansen N.F."/>
            <person name="Hayashizaki Y."/>
            <person name="Johnson-Hopson C."/>
            <person name="Hsuan V.W."/>
            <person name="Iida K."/>
            <person name="Karnes M."/>
            <person name="Khan S."/>
            <person name="Koesema E."/>
            <person name="Ishida J."/>
            <person name="Jiang P.X."/>
            <person name="Jones T."/>
            <person name="Kawai J."/>
            <person name="Kamiya A."/>
            <person name="Meyers C."/>
            <person name="Nakajima M."/>
            <person name="Narusaka M."/>
            <person name="Seki M."/>
            <person name="Sakurai T."/>
            <person name="Satou M."/>
            <person name="Tamse R."/>
            <person name="Vaysberg M."/>
            <person name="Wallender E.K."/>
            <person name="Wong C."/>
            <person name="Yamamura Y."/>
            <person name="Yuan S."/>
            <person name="Shinozaki K."/>
            <person name="Davis R.W."/>
            <person name="Theologis A."/>
            <person name="Ecker J.R."/>
        </authorList>
    </citation>
    <scope>NUCLEOTIDE SEQUENCE [LARGE SCALE MRNA]</scope>
    <source>
        <strain>cv. Columbia</strain>
    </source>
</reference>
<reference key="4">
    <citation type="submission" date="2002-03" db="EMBL/GenBank/DDBJ databases">
        <title>Full-length cDNA from Arabidopsis thaliana.</title>
        <authorList>
            <person name="Brover V.V."/>
            <person name="Troukhan M.E."/>
            <person name="Alexandrov N.A."/>
            <person name="Lu Y.-P."/>
            <person name="Flavell R.B."/>
            <person name="Feldmann K.A."/>
        </authorList>
    </citation>
    <scope>NUCLEOTIDE SEQUENCE [LARGE SCALE MRNA]</scope>
</reference>
<reference key="5">
    <citation type="journal article" date="2004" name="Trends Plant Sci.">
        <title>The growing family of mitochondrial carriers in Arabidopsis.</title>
        <authorList>
            <person name="Picault N."/>
            <person name="Hodges M."/>
            <person name="Palmieri L."/>
            <person name="Palmieri F."/>
        </authorList>
    </citation>
    <scope>GENE FAMILY</scope>
</reference>
<reference key="6">
    <citation type="journal article" date="2007" name="Planta">
        <title>AtMTM1, a novel mitochondrial protein, may be involved in activation of the manganese-containing superoxide dismutase in Arabidopsis.</title>
        <authorList>
            <person name="Su Z."/>
            <person name="Chai M.F."/>
            <person name="Lu P.L."/>
            <person name="An R."/>
            <person name="Chen J."/>
            <person name="Wang X.C."/>
        </authorList>
    </citation>
    <scope>FUNCTION</scope>
    <scope>SUBCELLULAR LOCATION</scope>
    <scope>INDUCTION BY PARAQUAT</scope>
    <scope>TISSUE SPECIFICITY</scope>
</reference>
<protein>
    <recommendedName>
        <fullName>Mitochondrial carrier protein MTM1</fullName>
    </recommendedName>
    <alternativeName>
        <fullName>Manganese tracking factor for mitochondrial SOD2</fullName>
    </alternativeName>
</protein>